<reference key="1">
    <citation type="journal article" date="2006" name="Proc. Natl. Acad. Sci. U.S.A.">
        <title>Comparative genomics of the lactic acid bacteria.</title>
        <authorList>
            <person name="Makarova K.S."/>
            <person name="Slesarev A."/>
            <person name="Wolf Y.I."/>
            <person name="Sorokin A."/>
            <person name="Mirkin B."/>
            <person name="Koonin E.V."/>
            <person name="Pavlov A."/>
            <person name="Pavlova N."/>
            <person name="Karamychev V."/>
            <person name="Polouchine N."/>
            <person name="Shakhova V."/>
            <person name="Grigoriev I."/>
            <person name="Lou Y."/>
            <person name="Rohksar D."/>
            <person name="Lucas S."/>
            <person name="Huang K."/>
            <person name="Goodstein D.M."/>
            <person name="Hawkins T."/>
            <person name="Plengvidhya V."/>
            <person name="Welker D."/>
            <person name="Hughes J."/>
            <person name="Goh Y."/>
            <person name="Benson A."/>
            <person name="Baldwin K."/>
            <person name="Lee J.-H."/>
            <person name="Diaz-Muniz I."/>
            <person name="Dosti B."/>
            <person name="Smeianov V."/>
            <person name="Wechter W."/>
            <person name="Barabote R."/>
            <person name="Lorca G."/>
            <person name="Altermann E."/>
            <person name="Barrangou R."/>
            <person name="Ganesan B."/>
            <person name="Xie Y."/>
            <person name="Rawsthorne H."/>
            <person name="Tamir D."/>
            <person name="Parker C."/>
            <person name="Breidt F."/>
            <person name="Broadbent J.R."/>
            <person name="Hutkins R."/>
            <person name="O'Sullivan D."/>
            <person name="Steele J."/>
            <person name="Unlu G."/>
            <person name="Saier M.H. Jr."/>
            <person name="Klaenhammer T."/>
            <person name="Richardson P."/>
            <person name="Kozyavkin S."/>
            <person name="Weimer B.C."/>
            <person name="Mills D.A."/>
        </authorList>
    </citation>
    <scope>NUCLEOTIDE SEQUENCE [LARGE SCALE GENOMIC DNA]</scope>
    <source>
        <strain>ATCC BAA-491 / LMD-9</strain>
    </source>
</reference>
<proteinExistence type="inferred from homology"/>
<dbReference type="EMBL" id="CP000419">
    <property type="protein sequence ID" value="ABJ65590.1"/>
    <property type="molecule type" value="Genomic_DNA"/>
</dbReference>
<dbReference type="RefSeq" id="WP_002949411.1">
    <property type="nucleotide sequence ID" value="NZ_CP086001.1"/>
</dbReference>
<dbReference type="SMR" id="Q03MI2"/>
<dbReference type="KEGG" id="ste:STER_0279"/>
<dbReference type="HOGENOM" id="CLU_105319_0_0_9"/>
<dbReference type="Gene3D" id="3.40.50.450">
    <property type="match status" value="1"/>
</dbReference>
<dbReference type="HAMAP" id="MF_01575">
    <property type="entry name" value="UPF0398"/>
    <property type="match status" value="1"/>
</dbReference>
<dbReference type="InterPro" id="IPR010697">
    <property type="entry name" value="YspA"/>
</dbReference>
<dbReference type="NCBIfam" id="NF010181">
    <property type="entry name" value="PRK13660.1"/>
    <property type="match status" value="1"/>
</dbReference>
<dbReference type="PANTHER" id="PTHR38440:SF1">
    <property type="entry name" value="UPF0398 PROTEIN SPR0331"/>
    <property type="match status" value="1"/>
</dbReference>
<dbReference type="PANTHER" id="PTHR38440">
    <property type="entry name" value="UPF0398 PROTEIN YPSA"/>
    <property type="match status" value="1"/>
</dbReference>
<dbReference type="Pfam" id="PF06908">
    <property type="entry name" value="YpsA"/>
    <property type="match status" value="1"/>
</dbReference>
<dbReference type="PIRSF" id="PIRSF021290">
    <property type="entry name" value="DUF1273"/>
    <property type="match status" value="1"/>
</dbReference>
<dbReference type="SUPFAM" id="SSF102405">
    <property type="entry name" value="MCP/YpsA-like"/>
    <property type="match status" value="1"/>
</dbReference>
<organism>
    <name type="scientific">Streptococcus thermophilus (strain ATCC BAA-491 / LMD-9)</name>
    <dbReference type="NCBI Taxonomy" id="322159"/>
    <lineage>
        <taxon>Bacteria</taxon>
        <taxon>Bacillati</taxon>
        <taxon>Bacillota</taxon>
        <taxon>Bacilli</taxon>
        <taxon>Lactobacillales</taxon>
        <taxon>Streptococcaceae</taxon>
        <taxon>Streptococcus</taxon>
    </lineage>
</organism>
<name>Y279_STRTD</name>
<sequence>MTSLLITGYKSFELGVFKDKDPKVNIIKKAIKRDLKRFLDEGVDWMIFTGNLGFEFWALEVAKELQKDYPLRLATLFPFETHGQNWSEANQEKLAAFKQVDFVKYSFPAYQSPAQFKQFNQFLIDNTDQAYLFYEPENETNLKYFYNMIIAASDYPLFRLTFDDLNEVMSE</sequence>
<protein>
    <recommendedName>
        <fullName evidence="1">UPF0398 protein STER_0279</fullName>
    </recommendedName>
</protein>
<gene>
    <name type="ordered locus">STER_0279</name>
</gene>
<accession>Q03MI2</accession>
<evidence type="ECO:0000255" key="1">
    <source>
        <dbReference type="HAMAP-Rule" id="MF_01575"/>
    </source>
</evidence>
<feature type="chain" id="PRO_1000069223" description="UPF0398 protein STER_0279">
    <location>
        <begin position="1"/>
        <end position="171"/>
    </location>
</feature>
<comment type="similarity">
    <text evidence="1">Belongs to the UPF0398 family.</text>
</comment>